<sequence length="353" mass="40313">MMVTSSSIPIGQILYHDPFFFVKREIFYFFLIFLLSFILLRIPMSFWEKNSNLILIISIFLLTIVLLIGKSVHGSYRWINIGILHIQPAEICKISSFFYISNYLSRKTNEVRNNFWGFLKPITIIIIQSVLLLAEPDLGTVIVLFLTTLSVLFLSGVKIKQFFIIIFFVTLIITALVLFEPYRIKRILSFWNPWKDPFGNGYQLTQSLIALGRGHFFGQGLGNSIQKLNYLPEAHSDFIFSIIGEELGYIGCFLILLMIFFISFRAMYIGQQSFEKKQVFSGFLACSIGLWFSFQTLINIGAVTGILPTKGLTLPLISYGGSSLIVNLMAICILLRIDFEIRLSEHQAFPKGI</sequence>
<gene>
    <name evidence="1" type="primary">ftsW</name>
    <name type="ordered locus">BUsg_211</name>
</gene>
<evidence type="ECO:0000255" key="1">
    <source>
        <dbReference type="HAMAP-Rule" id="MF_00913"/>
    </source>
</evidence>
<accession>Q8K9T3</accession>
<reference key="1">
    <citation type="journal article" date="2002" name="Science">
        <title>50 million years of genomic stasis in endosymbiotic bacteria.</title>
        <authorList>
            <person name="Tamas I."/>
            <person name="Klasson L."/>
            <person name="Canbaeck B."/>
            <person name="Naeslund A.K."/>
            <person name="Eriksson A.-S."/>
            <person name="Wernegreen J.J."/>
            <person name="Sandstroem J.P."/>
            <person name="Moran N.A."/>
            <person name="Andersson S.G.E."/>
        </authorList>
    </citation>
    <scope>NUCLEOTIDE SEQUENCE [LARGE SCALE GENOMIC DNA]</scope>
    <source>
        <strain>Sg</strain>
    </source>
</reference>
<comment type="function">
    <text evidence="1">Peptidoglycan polymerase that is essential for cell division.</text>
</comment>
<comment type="catalytic activity">
    <reaction evidence="1">
        <text>[GlcNAc-(1-&gt;4)-Mur2Ac(oyl-L-Ala-gamma-D-Glu-L-Lys-D-Ala-D-Ala)](n)-di-trans,octa-cis-undecaprenyl diphosphate + beta-D-GlcNAc-(1-&gt;4)-Mur2Ac(oyl-L-Ala-gamma-D-Glu-L-Lys-D-Ala-D-Ala)-di-trans,octa-cis-undecaprenyl diphosphate = [GlcNAc-(1-&gt;4)-Mur2Ac(oyl-L-Ala-gamma-D-Glu-L-Lys-D-Ala-D-Ala)](n+1)-di-trans,octa-cis-undecaprenyl diphosphate + di-trans,octa-cis-undecaprenyl diphosphate + H(+)</text>
        <dbReference type="Rhea" id="RHEA:23708"/>
        <dbReference type="Rhea" id="RHEA-COMP:9602"/>
        <dbReference type="Rhea" id="RHEA-COMP:9603"/>
        <dbReference type="ChEBI" id="CHEBI:15378"/>
        <dbReference type="ChEBI" id="CHEBI:58405"/>
        <dbReference type="ChEBI" id="CHEBI:60033"/>
        <dbReference type="ChEBI" id="CHEBI:78435"/>
        <dbReference type="EC" id="2.4.99.28"/>
    </reaction>
</comment>
<comment type="pathway">
    <text evidence="1">Cell wall biogenesis; peptidoglycan biosynthesis.</text>
</comment>
<comment type="subcellular location">
    <subcellularLocation>
        <location evidence="1">Cell inner membrane</location>
        <topology evidence="1">Multi-pass membrane protein</topology>
    </subcellularLocation>
    <text evidence="1">Localizes to the division septum.</text>
</comment>
<comment type="similarity">
    <text evidence="1">Belongs to the SEDS family. FtsW subfamily.</text>
</comment>
<name>FTSW_BUCAP</name>
<keyword id="KW-0131">Cell cycle</keyword>
<keyword id="KW-0132">Cell division</keyword>
<keyword id="KW-0997">Cell inner membrane</keyword>
<keyword id="KW-1003">Cell membrane</keyword>
<keyword id="KW-0133">Cell shape</keyword>
<keyword id="KW-0961">Cell wall biogenesis/degradation</keyword>
<keyword id="KW-0328">Glycosyltransferase</keyword>
<keyword id="KW-0472">Membrane</keyword>
<keyword id="KW-0573">Peptidoglycan synthesis</keyword>
<keyword id="KW-0808">Transferase</keyword>
<keyword id="KW-0812">Transmembrane</keyword>
<keyword id="KW-1133">Transmembrane helix</keyword>
<feature type="chain" id="PRO_0000062698" description="Probable peptidoglycan glycosyltransferase FtsW">
    <location>
        <begin position="1"/>
        <end position="353"/>
    </location>
</feature>
<feature type="transmembrane region" description="Helical" evidence="1">
    <location>
        <begin position="26"/>
        <end position="46"/>
    </location>
</feature>
<feature type="transmembrane region" description="Helical" evidence="1">
    <location>
        <begin position="53"/>
        <end position="73"/>
    </location>
</feature>
<feature type="transmembrane region" description="Helical" evidence="1">
    <location>
        <begin position="115"/>
        <end position="135"/>
    </location>
</feature>
<feature type="transmembrane region" description="Helical" evidence="1">
    <location>
        <begin position="137"/>
        <end position="157"/>
    </location>
</feature>
<feature type="transmembrane region" description="Helical" evidence="1">
    <location>
        <begin position="162"/>
        <end position="182"/>
    </location>
</feature>
<feature type="transmembrane region" description="Helical" evidence="1">
    <location>
        <begin position="242"/>
        <end position="262"/>
    </location>
</feature>
<feature type="transmembrane region" description="Helical" evidence="1">
    <location>
        <begin position="288"/>
        <end position="308"/>
    </location>
</feature>
<feature type="transmembrane region" description="Helical" evidence="1">
    <location>
        <begin position="314"/>
        <end position="334"/>
    </location>
</feature>
<dbReference type="EC" id="2.4.99.28" evidence="1"/>
<dbReference type="EMBL" id="AE013218">
    <property type="protein sequence ID" value="AAM67774.1"/>
    <property type="molecule type" value="Genomic_DNA"/>
</dbReference>
<dbReference type="SMR" id="Q8K9T3"/>
<dbReference type="STRING" id="198804.BUsg_211"/>
<dbReference type="KEGG" id="bas:BUsg_211"/>
<dbReference type="eggNOG" id="COG0772">
    <property type="taxonomic scope" value="Bacteria"/>
</dbReference>
<dbReference type="HOGENOM" id="CLU_029243_1_1_6"/>
<dbReference type="UniPathway" id="UPA00219"/>
<dbReference type="Proteomes" id="UP000000416">
    <property type="component" value="Chromosome"/>
</dbReference>
<dbReference type="GO" id="GO:0032153">
    <property type="term" value="C:cell division site"/>
    <property type="evidence" value="ECO:0007669"/>
    <property type="project" value="UniProtKB-UniRule"/>
</dbReference>
<dbReference type="GO" id="GO:0005886">
    <property type="term" value="C:plasma membrane"/>
    <property type="evidence" value="ECO:0007669"/>
    <property type="project" value="UniProtKB-SubCell"/>
</dbReference>
<dbReference type="GO" id="GO:0015648">
    <property type="term" value="F:lipid-linked peptidoglycan transporter activity"/>
    <property type="evidence" value="ECO:0007669"/>
    <property type="project" value="TreeGrafter"/>
</dbReference>
<dbReference type="GO" id="GO:0008955">
    <property type="term" value="F:peptidoglycan glycosyltransferase activity"/>
    <property type="evidence" value="ECO:0007669"/>
    <property type="project" value="UniProtKB-UniRule"/>
</dbReference>
<dbReference type="GO" id="GO:0071555">
    <property type="term" value="P:cell wall organization"/>
    <property type="evidence" value="ECO:0007669"/>
    <property type="project" value="UniProtKB-KW"/>
</dbReference>
<dbReference type="GO" id="GO:0043093">
    <property type="term" value="P:FtsZ-dependent cytokinesis"/>
    <property type="evidence" value="ECO:0007669"/>
    <property type="project" value="UniProtKB-UniRule"/>
</dbReference>
<dbReference type="GO" id="GO:0009252">
    <property type="term" value="P:peptidoglycan biosynthetic process"/>
    <property type="evidence" value="ECO:0007669"/>
    <property type="project" value="UniProtKB-UniRule"/>
</dbReference>
<dbReference type="GO" id="GO:0008360">
    <property type="term" value="P:regulation of cell shape"/>
    <property type="evidence" value="ECO:0007669"/>
    <property type="project" value="UniProtKB-KW"/>
</dbReference>
<dbReference type="HAMAP" id="MF_00913">
    <property type="entry name" value="PGT_FtsW_proteobact"/>
    <property type="match status" value="1"/>
</dbReference>
<dbReference type="InterPro" id="IPR018365">
    <property type="entry name" value="Cell_cycle_FtsW-rel_CS"/>
</dbReference>
<dbReference type="InterPro" id="IPR013437">
    <property type="entry name" value="FtsW"/>
</dbReference>
<dbReference type="InterPro" id="IPR001182">
    <property type="entry name" value="FtsW/RodA"/>
</dbReference>
<dbReference type="NCBIfam" id="TIGR02614">
    <property type="entry name" value="ftsW"/>
    <property type="match status" value="1"/>
</dbReference>
<dbReference type="NCBIfam" id="NF008042">
    <property type="entry name" value="PRK10774.1"/>
    <property type="match status" value="1"/>
</dbReference>
<dbReference type="PANTHER" id="PTHR30474">
    <property type="entry name" value="CELL CYCLE PROTEIN"/>
    <property type="match status" value="1"/>
</dbReference>
<dbReference type="PANTHER" id="PTHR30474:SF2">
    <property type="entry name" value="PEPTIDOGLYCAN GLYCOSYLTRANSFERASE FTSW-RELATED"/>
    <property type="match status" value="1"/>
</dbReference>
<dbReference type="Pfam" id="PF01098">
    <property type="entry name" value="FTSW_RODA_SPOVE"/>
    <property type="match status" value="1"/>
</dbReference>
<dbReference type="PROSITE" id="PS00428">
    <property type="entry name" value="FTSW_RODA_SPOVE"/>
    <property type="match status" value="1"/>
</dbReference>
<proteinExistence type="inferred from homology"/>
<organism>
    <name type="scientific">Buchnera aphidicola subsp. Schizaphis graminum (strain Sg)</name>
    <dbReference type="NCBI Taxonomy" id="198804"/>
    <lineage>
        <taxon>Bacteria</taxon>
        <taxon>Pseudomonadati</taxon>
        <taxon>Pseudomonadota</taxon>
        <taxon>Gammaproteobacteria</taxon>
        <taxon>Enterobacterales</taxon>
        <taxon>Erwiniaceae</taxon>
        <taxon>Buchnera</taxon>
    </lineage>
</organism>
<protein>
    <recommendedName>
        <fullName evidence="1">Probable peptidoglycan glycosyltransferase FtsW</fullName>
        <shortName evidence="1">PGT</shortName>
        <ecNumber evidence="1">2.4.99.28</ecNumber>
    </recommendedName>
    <alternativeName>
        <fullName evidence="1">Cell division protein FtsW</fullName>
    </alternativeName>
    <alternativeName>
        <fullName evidence="1">Cell wall polymerase</fullName>
    </alternativeName>
    <alternativeName>
        <fullName evidence="1">Peptidoglycan polymerase</fullName>
        <shortName evidence="1">PG polymerase</shortName>
    </alternativeName>
</protein>